<sequence length="323" mass="35719">MNPNFLEFEQPIADLEAKIEELRLVGSGSDINISEEVAKLQEKSITLTESIFRGLSSWQISQLSRHPKRPYMLDYIKRIFTDFDELHGDRAFSDDPAIIGGMTRLNGQPVMVIGHQKGREVKEKVRRNFGMPKPEGYRKALRLMEMAERFKLPVLTFIDTPGAFPGIDAEERGQSEAIARNLRVMSQLKTPILATVIGEGGSGGALAIGVCDHLQMLEFSTYSVISPEGCASILWRSADKAPEAAQAMGLTAGRLHELGIVDQVIKEPLGGAHRDYDQAADAIRKALAAQLESLCSMETDALINRRYERLMSYGNVVSDPADE</sequence>
<accession>Q0VQE1</accession>
<dbReference type="EC" id="2.1.3.15" evidence="1"/>
<dbReference type="EMBL" id="AM286690">
    <property type="protein sequence ID" value="CAL16607.1"/>
    <property type="molecule type" value="Genomic_DNA"/>
</dbReference>
<dbReference type="RefSeq" id="WP_011588442.1">
    <property type="nucleotide sequence ID" value="NC_008260.1"/>
</dbReference>
<dbReference type="SMR" id="Q0VQE1"/>
<dbReference type="STRING" id="393595.ABO_1159"/>
<dbReference type="KEGG" id="abo:ABO_1159"/>
<dbReference type="eggNOG" id="COG0825">
    <property type="taxonomic scope" value="Bacteria"/>
</dbReference>
<dbReference type="HOGENOM" id="CLU_015486_0_2_6"/>
<dbReference type="OrthoDB" id="9808023at2"/>
<dbReference type="UniPathway" id="UPA00655">
    <property type="reaction ID" value="UER00711"/>
</dbReference>
<dbReference type="Proteomes" id="UP000008871">
    <property type="component" value="Chromosome"/>
</dbReference>
<dbReference type="GO" id="GO:0009317">
    <property type="term" value="C:acetyl-CoA carboxylase complex"/>
    <property type="evidence" value="ECO:0007669"/>
    <property type="project" value="InterPro"/>
</dbReference>
<dbReference type="GO" id="GO:0003989">
    <property type="term" value="F:acetyl-CoA carboxylase activity"/>
    <property type="evidence" value="ECO:0007669"/>
    <property type="project" value="InterPro"/>
</dbReference>
<dbReference type="GO" id="GO:0005524">
    <property type="term" value="F:ATP binding"/>
    <property type="evidence" value="ECO:0007669"/>
    <property type="project" value="UniProtKB-KW"/>
</dbReference>
<dbReference type="GO" id="GO:0016743">
    <property type="term" value="F:carboxyl- or carbamoyltransferase activity"/>
    <property type="evidence" value="ECO:0007669"/>
    <property type="project" value="UniProtKB-UniRule"/>
</dbReference>
<dbReference type="GO" id="GO:0006633">
    <property type="term" value="P:fatty acid biosynthetic process"/>
    <property type="evidence" value="ECO:0007669"/>
    <property type="project" value="UniProtKB-KW"/>
</dbReference>
<dbReference type="GO" id="GO:2001295">
    <property type="term" value="P:malonyl-CoA biosynthetic process"/>
    <property type="evidence" value="ECO:0007669"/>
    <property type="project" value="UniProtKB-UniRule"/>
</dbReference>
<dbReference type="FunFam" id="3.90.226.10:FF:000008">
    <property type="entry name" value="Acetyl-coenzyme A carboxylase carboxyl transferase subunit alpha"/>
    <property type="match status" value="1"/>
</dbReference>
<dbReference type="Gene3D" id="3.90.226.10">
    <property type="entry name" value="2-enoyl-CoA Hydratase, Chain A, domain 1"/>
    <property type="match status" value="1"/>
</dbReference>
<dbReference type="HAMAP" id="MF_00823">
    <property type="entry name" value="AcetylCoA_CT_alpha"/>
    <property type="match status" value="1"/>
</dbReference>
<dbReference type="InterPro" id="IPR001095">
    <property type="entry name" value="Acetyl_CoA_COase_a_su"/>
</dbReference>
<dbReference type="InterPro" id="IPR029045">
    <property type="entry name" value="ClpP/crotonase-like_dom_sf"/>
</dbReference>
<dbReference type="InterPro" id="IPR011763">
    <property type="entry name" value="COA_CT_C"/>
</dbReference>
<dbReference type="NCBIfam" id="TIGR00513">
    <property type="entry name" value="accA"/>
    <property type="match status" value="1"/>
</dbReference>
<dbReference type="NCBIfam" id="NF041504">
    <property type="entry name" value="AccA_sub"/>
    <property type="match status" value="1"/>
</dbReference>
<dbReference type="NCBIfam" id="NF004344">
    <property type="entry name" value="PRK05724.1"/>
    <property type="match status" value="1"/>
</dbReference>
<dbReference type="PANTHER" id="PTHR42853">
    <property type="entry name" value="ACETYL-COENZYME A CARBOXYLASE CARBOXYL TRANSFERASE SUBUNIT ALPHA"/>
    <property type="match status" value="1"/>
</dbReference>
<dbReference type="PANTHER" id="PTHR42853:SF3">
    <property type="entry name" value="ACETYL-COENZYME A CARBOXYLASE CARBOXYL TRANSFERASE SUBUNIT ALPHA, CHLOROPLASTIC"/>
    <property type="match status" value="1"/>
</dbReference>
<dbReference type="Pfam" id="PF03255">
    <property type="entry name" value="ACCA"/>
    <property type="match status" value="1"/>
</dbReference>
<dbReference type="PRINTS" id="PR01069">
    <property type="entry name" value="ACCCTRFRASEA"/>
</dbReference>
<dbReference type="SUPFAM" id="SSF52096">
    <property type="entry name" value="ClpP/crotonase"/>
    <property type="match status" value="1"/>
</dbReference>
<dbReference type="PROSITE" id="PS50989">
    <property type="entry name" value="COA_CT_CTER"/>
    <property type="match status" value="1"/>
</dbReference>
<keyword id="KW-0067">ATP-binding</keyword>
<keyword id="KW-0963">Cytoplasm</keyword>
<keyword id="KW-0275">Fatty acid biosynthesis</keyword>
<keyword id="KW-0276">Fatty acid metabolism</keyword>
<keyword id="KW-0444">Lipid biosynthesis</keyword>
<keyword id="KW-0443">Lipid metabolism</keyword>
<keyword id="KW-0547">Nucleotide-binding</keyword>
<keyword id="KW-1185">Reference proteome</keyword>
<keyword id="KW-0808">Transferase</keyword>
<reference key="1">
    <citation type="journal article" date="2006" name="Nat. Biotechnol.">
        <title>Genome sequence of the ubiquitous hydrocarbon-degrading marine bacterium Alcanivorax borkumensis.</title>
        <authorList>
            <person name="Schneiker S."/>
            <person name="Martins dos Santos V.A.P."/>
            <person name="Bartels D."/>
            <person name="Bekel T."/>
            <person name="Brecht M."/>
            <person name="Buhrmester J."/>
            <person name="Chernikova T.N."/>
            <person name="Denaro R."/>
            <person name="Ferrer M."/>
            <person name="Gertler C."/>
            <person name="Goesmann A."/>
            <person name="Golyshina O.V."/>
            <person name="Kaminski F."/>
            <person name="Khachane A.N."/>
            <person name="Lang S."/>
            <person name="Linke B."/>
            <person name="McHardy A.C."/>
            <person name="Meyer F."/>
            <person name="Nechitaylo T."/>
            <person name="Puehler A."/>
            <person name="Regenhardt D."/>
            <person name="Rupp O."/>
            <person name="Sabirova J.S."/>
            <person name="Selbitschka W."/>
            <person name="Yakimov M.M."/>
            <person name="Timmis K.N."/>
            <person name="Vorhoelter F.-J."/>
            <person name="Weidner S."/>
            <person name="Kaiser O."/>
            <person name="Golyshin P.N."/>
        </authorList>
    </citation>
    <scope>NUCLEOTIDE SEQUENCE [LARGE SCALE GENOMIC DNA]</scope>
    <source>
        <strain>ATCC 700651 / DSM 11573 / NCIMB 13689 / SK2</strain>
    </source>
</reference>
<proteinExistence type="inferred from homology"/>
<organism>
    <name type="scientific">Alcanivorax borkumensis (strain ATCC 700651 / DSM 11573 / NCIMB 13689 / SK2)</name>
    <dbReference type="NCBI Taxonomy" id="393595"/>
    <lineage>
        <taxon>Bacteria</taxon>
        <taxon>Pseudomonadati</taxon>
        <taxon>Pseudomonadota</taxon>
        <taxon>Gammaproteobacteria</taxon>
        <taxon>Oceanospirillales</taxon>
        <taxon>Alcanivoracaceae</taxon>
        <taxon>Alcanivorax</taxon>
    </lineage>
</organism>
<comment type="function">
    <text evidence="1">Component of the acetyl coenzyme A carboxylase (ACC) complex. First, biotin carboxylase catalyzes the carboxylation of biotin on its carrier protein (BCCP) and then the CO(2) group is transferred by the carboxyltransferase to acetyl-CoA to form malonyl-CoA.</text>
</comment>
<comment type="catalytic activity">
    <reaction evidence="1">
        <text>N(6)-carboxybiotinyl-L-lysyl-[protein] + acetyl-CoA = N(6)-biotinyl-L-lysyl-[protein] + malonyl-CoA</text>
        <dbReference type="Rhea" id="RHEA:54728"/>
        <dbReference type="Rhea" id="RHEA-COMP:10505"/>
        <dbReference type="Rhea" id="RHEA-COMP:10506"/>
        <dbReference type="ChEBI" id="CHEBI:57288"/>
        <dbReference type="ChEBI" id="CHEBI:57384"/>
        <dbReference type="ChEBI" id="CHEBI:83144"/>
        <dbReference type="ChEBI" id="CHEBI:83145"/>
        <dbReference type="EC" id="2.1.3.15"/>
    </reaction>
</comment>
<comment type="pathway">
    <text evidence="1">Lipid metabolism; malonyl-CoA biosynthesis; malonyl-CoA from acetyl-CoA: step 1/1.</text>
</comment>
<comment type="subunit">
    <text evidence="1">Acetyl-CoA carboxylase is a heterohexamer composed of biotin carboxyl carrier protein (AccB), biotin carboxylase (AccC) and two subunits each of ACCase subunit alpha (AccA) and ACCase subunit beta (AccD).</text>
</comment>
<comment type="subcellular location">
    <subcellularLocation>
        <location evidence="1">Cytoplasm</location>
    </subcellularLocation>
</comment>
<comment type="similarity">
    <text evidence="1">Belongs to the AccA family.</text>
</comment>
<evidence type="ECO:0000255" key="1">
    <source>
        <dbReference type="HAMAP-Rule" id="MF_00823"/>
    </source>
</evidence>
<evidence type="ECO:0000255" key="2">
    <source>
        <dbReference type="PROSITE-ProRule" id="PRU01137"/>
    </source>
</evidence>
<name>ACCA_ALCBS</name>
<gene>
    <name evidence="1" type="primary">accA</name>
    <name type="ordered locus">ABO_1159</name>
</gene>
<feature type="chain" id="PRO_1000062572" description="Acetyl-coenzyme A carboxylase carboxyl transferase subunit alpha">
    <location>
        <begin position="1"/>
        <end position="323"/>
    </location>
</feature>
<feature type="domain" description="CoA carboxyltransferase C-terminal" evidence="2">
    <location>
        <begin position="32"/>
        <end position="293"/>
    </location>
</feature>
<protein>
    <recommendedName>
        <fullName evidence="1">Acetyl-coenzyme A carboxylase carboxyl transferase subunit alpha</fullName>
        <shortName evidence="1">ACCase subunit alpha</shortName>
        <shortName evidence="1">Acetyl-CoA carboxylase carboxyltransferase subunit alpha</shortName>
        <ecNumber evidence="1">2.1.3.15</ecNumber>
    </recommendedName>
</protein>